<accession>B1XS59</accession>
<dbReference type="EMBL" id="CP001010">
    <property type="protein sequence ID" value="ACB44694.1"/>
    <property type="molecule type" value="Genomic_DNA"/>
</dbReference>
<dbReference type="SMR" id="B1XS59"/>
<dbReference type="STRING" id="452638.Pnec_1620"/>
<dbReference type="KEGG" id="pne:Pnec_1620"/>
<dbReference type="eggNOG" id="COG1660">
    <property type="taxonomic scope" value="Bacteria"/>
</dbReference>
<dbReference type="HOGENOM" id="CLU_059558_1_1_4"/>
<dbReference type="OrthoDB" id="9784461at2"/>
<dbReference type="GO" id="GO:0005524">
    <property type="term" value="F:ATP binding"/>
    <property type="evidence" value="ECO:0007669"/>
    <property type="project" value="UniProtKB-UniRule"/>
</dbReference>
<dbReference type="GO" id="GO:0005525">
    <property type="term" value="F:GTP binding"/>
    <property type="evidence" value="ECO:0007669"/>
    <property type="project" value="UniProtKB-UniRule"/>
</dbReference>
<dbReference type="HAMAP" id="MF_00636">
    <property type="entry name" value="RapZ_like"/>
    <property type="match status" value="1"/>
</dbReference>
<dbReference type="InterPro" id="IPR027417">
    <property type="entry name" value="P-loop_NTPase"/>
</dbReference>
<dbReference type="InterPro" id="IPR005337">
    <property type="entry name" value="RapZ-like"/>
</dbReference>
<dbReference type="InterPro" id="IPR053930">
    <property type="entry name" value="RapZ-like_N"/>
</dbReference>
<dbReference type="InterPro" id="IPR053931">
    <property type="entry name" value="RapZ_C"/>
</dbReference>
<dbReference type="NCBIfam" id="NF003828">
    <property type="entry name" value="PRK05416.1"/>
    <property type="match status" value="1"/>
</dbReference>
<dbReference type="PANTHER" id="PTHR30448">
    <property type="entry name" value="RNASE ADAPTER PROTEIN RAPZ"/>
    <property type="match status" value="1"/>
</dbReference>
<dbReference type="PANTHER" id="PTHR30448:SF0">
    <property type="entry name" value="RNASE ADAPTER PROTEIN RAPZ"/>
    <property type="match status" value="1"/>
</dbReference>
<dbReference type="Pfam" id="PF22740">
    <property type="entry name" value="PapZ_C"/>
    <property type="match status" value="1"/>
</dbReference>
<dbReference type="Pfam" id="PF03668">
    <property type="entry name" value="RapZ-like_N"/>
    <property type="match status" value="1"/>
</dbReference>
<dbReference type="PIRSF" id="PIRSF005052">
    <property type="entry name" value="P-loopkin"/>
    <property type="match status" value="1"/>
</dbReference>
<dbReference type="SUPFAM" id="SSF52540">
    <property type="entry name" value="P-loop containing nucleoside triphosphate hydrolases"/>
    <property type="match status" value="1"/>
</dbReference>
<gene>
    <name type="ordered locus">Pnec_1620</name>
</gene>
<feature type="chain" id="PRO_1000130771" description="Nucleotide-binding protein Pnec_1620">
    <location>
        <begin position="1"/>
        <end position="296"/>
    </location>
</feature>
<feature type="binding site" evidence="1">
    <location>
        <begin position="8"/>
        <end position="15"/>
    </location>
    <ligand>
        <name>ATP</name>
        <dbReference type="ChEBI" id="CHEBI:30616"/>
    </ligand>
</feature>
<feature type="binding site" evidence="1">
    <location>
        <begin position="57"/>
        <end position="60"/>
    </location>
    <ligand>
        <name>GTP</name>
        <dbReference type="ChEBI" id="CHEBI:37565"/>
    </ligand>
</feature>
<reference key="1">
    <citation type="journal article" date="2013" name="Proc. Natl. Acad. Sci. U.S.A.">
        <title>Polynucleobacter necessarius, a model for genome reduction in both free-living and symbiotic bacteria.</title>
        <authorList>
            <person name="Boscaro V."/>
            <person name="Felletti M."/>
            <person name="Vannini C."/>
            <person name="Ackerman M.S."/>
            <person name="Chain P.S."/>
            <person name="Malfatti S."/>
            <person name="Vergez L.M."/>
            <person name="Shin M."/>
            <person name="Doak T.G."/>
            <person name="Lynch M."/>
            <person name="Petroni G."/>
        </authorList>
    </citation>
    <scope>NUCLEOTIDE SEQUENCE [LARGE SCALE GENOMIC DNA]</scope>
    <source>
        <strain>STIR1</strain>
    </source>
</reference>
<protein>
    <recommendedName>
        <fullName evidence="1">Nucleotide-binding protein Pnec_1620</fullName>
    </recommendedName>
</protein>
<evidence type="ECO:0000255" key="1">
    <source>
        <dbReference type="HAMAP-Rule" id="MF_00636"/>
    </source>
</evidence>
<comment type="function">
    <text evidence="1">Displays ATPase and GTPase activities.</text>
</comment>
<comment type="similarity">
    <text evidence="1">Belongs to the RapZ-like family.</text>
</comment>
<name>Y1620_POLNS</name>
<organism>
    <name type="scientific">Polynucleobacter necessarius subsp. necessarius (strain STIR1)</name>
    <dbReference type="NCBI Taxonomy" id="452638"/>
    <lineage>
        <taxon>Bacteria</taxon>
        <taxon>Pseudomonadati</taxon>
        <taxon>Pseudomonadota</taxon>
        <taxon>Betaproteobacteria</taxon>
        <taxon>Burkholderiales</taxon>
        <taxon>Burkholderiaceae</taxon>
        <taxon>Polynucleobacter</taxon>
    </lineage>
</organism>
<keyword id="KW-0067">ATP-binding</keyword>
<keyword id="KW-0342">GTP-binding</keyword>
<keyword id="KW-0547">Nucleotide-binding</keyword>
<sequence length="296" mass="33428">MQINLITGISGSGKSVALRAFEDAGYDCVDNLPVSLLVNLIITLEKEQCERVAVAIDARRGQSIADLPSTLENLRKSHQVRIVFLNADTNTLIQRFSETRRRHPLSTNAKQPQSATLIEAIDKERNLLEPLRAQAHSIDTSNIPAHALRSWIQDLLKDKPIGLTVVFESFGFKKGVPSEANLVFDVRCLPNPHYDKVLRPLTGNDKPVKEFLEKIPEVVNMEADITQFIHRWLPHYIADGRSYLTVAIGCTGGQHRSVYLVNRLSEYFRKQKDFGILQLNFLDRHRELDSIPVAKS</sequence>
<proteinExistence type="inferred from homology"/>